<gene>
    <name evidence="2" type="primary">betI</name>
    <name type="ordered locus">VVA0506</name>
</gene>
<dbReference type="EMBL" id="BA000038">
    <property type="protein sequence ID" value="BAC96532.1"/>
    <property type="molecule type" value="Genomic_DNA"/>
</dbReference>
<dbReference type="RefSeq" id="WP_011151877.1">
    <property type="nucleotide sequence ID" value="NC_005140.1"/>
</dbReference>
<dbReference type="SMR" id="Q7MF14"/>
<dbReference type="STRING" id="672.VV93_v1c35130"/>
<dbReference type="KEGG" id="vvy:VVA0506"/>
<dbReference type="PATRIC" id="fig|196600.6.peg.3706"/>
<dbReference type="eggNOG" id="COG1309">
    <property type="taxonomic scope" value="Bacteria"/>
</dbReference>
<dbReference type="HOGENOM" id="CLU_069356_15_4_6"/>
<dbReference type="UniPathway" id="UPA00529"/>
<dbReference type="Proteomes" id="UP000002675">
    <property type="component" value="Chromosome II"/>
</dbReference>
<dbReference type="GO" id="GO:0003700">
    <property type="term" value="F:DNA-binding transcription factor activity"/>
    <property type="evidence" value="ECO:0007669"/>
    <property type="project" value="UniProtKB-UniRule"/>
</dbReference>
<dbReference type="GO" id="GO:0000976">
    <property type="term" value="F:transcription cis-regulatory region binding"/>
    <property type="evidence" value="ECO:0007669"/>
    <property type="project" value="TreeGrafter"/>
</dbReference>
<dbReference type="GO" id="GO:0019285">
    <property type="term" value="P:glycine betaine biosynthetic process from choline"/>
    <property type="evidence" value="ECO:0007669"/>
    <property type="project" value="UniProtKB-UniRule"/>
</dbReference>
<dbReference type="GO" id="GO:0045892">
    <property type="term" value="P:negative regulation of DNA-templated transcription"/>
    <property type="evidence" value="ECO:0007669"/>
    <property type="project" value="UniProtKB-UniRule"/>
</dbReference>
<dbReference type="Gene3D" id="1.10.357.10">
    <property type="entry name" value="Tetracycline Repressor, domain 2"/>
    <property type="match status" value="1"/>
</dbReference>
<dbReference type="HAMAP" id="MF_00768">
    <property type="entry name" value="HTH_type_BetI"/>
    <property type="match status" value="1"/>
</dbReference>
<dbReference type="InterPro" id="IPR039538">
    <property type="entry name" value="BetI_C"/>
</dbReference>
<dbReference type="InterPro" id="IPR023772">
    <property type="entry name" value="DNA-bd_HTH_TetR-type_CS"/>
</dbReference>
<dbReference type="InterPro" id="IPR009057">
    <property type="entry name" value="Homeodomain-like_sf"/>
</dbReference>
<dbReference type="InterPro" id="IPR050109">
    <property type="entry name" value="HTH-type_TetR-like_transc_reg"/>
</dbReference>
<dbReference type="InterPro" id="IPR001647">
    <property type="entry name" value="HTH_TetR"/>
</dbReference>
<dbReference type="InterPro" id="IPR036271">
    <property type="entry name" value="Tet_transcr_reg_TetR-rel_C_sf"/>
</dbReference>
<dbReference type="InterPro" id="IPR017757">
    <property type="entry name" value="Tscrpt_rep_BetI"/>
</dbReference>
<dbReference type="NCBIfam" id="TIGR03384">
    <property type="entry name" value="betaine_BetI"/>
    <property type="match status" value="1"/>
</dbReference>
<dbReference type="NCBIfam" id="NF001978">
    <property type="entry name" value="PRK00767.1"/>
    <property type="match status" value="1"/>
</dbReference>
<dbReference type="PANTHER" id="PTHR30055:SF234">
    <property type="entry name" value="HTH-TYPE TRANSCRIPTIONAL REGULATOR BETI"/>
    <property type="match status" value="1"/>
</dbReference>
<dbReference type="PANTHER" id="PTHR30055">
    <property type="entry name" value="HTH-TYPE TRANSCRIPTIONAL REGULATOR RUTR"/>
    <property type="match status" value="1"/>
</dbReference>
<dbReference type="Pfam" id="PF13977">
    <property type="entry name" value="TetR_C_6"/>
    <property type="match status" value="1"/>
</dbReference>
<dbReference type="Pfam" id="PF00440">
    <property type="entry name" value="TetR_N"/>
    <property type="match status" value="1"/>
</dbReference>
<dbReference type="SUPFAM" id="SSF46689">
    <property type="entry name" value="Homeodomain-like"/>
    <property type="match status" value="1"/>
</dbReference>
<dbReference type="SUPFAM" id="SSF48498">
    <property type="entry name" value="Tetracyclin repressor-like, C-terminal domain"/>
    <property type="match status" value="1"/>
</dbReference>
<dbReference type="PROSITE" id="PS01081">
    <property type="entry name" value="HTH_TETR_1"/>
    <property type="match status" value="1"/>
</dbReference>
<dbReference type="PROSITE" id="PS50977">
    <property type="entry name" value="HTH_TETR_2"/>
    <property type="match status" value="1"/>
</dbReference>
<protein>
    <recommendedName>
        <fullName evidence="2">HTH-type transcriptional regulator BetI</fullName>
    </recommendedName>
</protein>
<organism>
    <name type="scientific">Vibrio vulnificus (strain YJ016)</name>
    <dbReference type="NCBI Taxonomy" id="196600"/>
    <lineage>
        <taxon>Bacteria</taxon>
        <taxon>Pseudomonadati</taxon>
        <taxon>Pseudomonadota</taxon>
        <taxon>Gammaproteobacteria</taxon>
        <taxon>Vibrionales</taxon>
        <taxon>Vibrionaceae</taxon>
        <taxon>Vibrio</taxon>
    </lineage>
</organism>
<proteinExistence type="inferred from homology"/>
<reference key="1">
    <citation type="journal article" date="2003" name="Genome Res.">
        <title>Comparative genome analysis of Vibrio vulnificus, a marine pathogen.</title>
        <authorList>
            <person name="Chen C.-Y."/>
            <person name="Wu K.-M."/>
            <person name="Chang Y.-C."/>
            <person name="Chang C.-H."/>
            <person name="Tsai H.-C."/>
            <person name="Liao T.-L."/>
            <person name="Liu Y.-M."/>
            <person name="Chen H.-J."/>
            <person name="Shen A.B.-T."/>
            <person name="Li J.-C."/>
            <person name="Su T.-L."/>
            <person name="Shao C.-P."/>
            <person name="Lee C.-T."/>
            <person name="Hor L.-I."/>
            <person name="Tsai S.-F."/>
        </authorList>
    </citation>
    <scope>NUCLEOTIDE SEQUENCE [LARGE SCALE GENOMIC DNA]</scope>
    <source>
        <strain>YJ016</strain>
    </source>
</reference>
<evidence type="ECO:0000250" key="1"/>
<evidence type="ECO:0000255" key="2">
    <source>
        <dbReference type="HAMAP-Rule" id="MF_00768"/>
    </source>
</evidence>
<comment type="function">
    <text evidence="1">Repressor involved in the biosynthesis of the osmoprotectant glycine betaine. It represses transcription of the choline transporter BetT and the genes of BetAB involved in the synthesis of glycine betaine (By similarity).</text>
</comment>
<comment type="pathway">
    <text>Amine and polyamine biosynthesis; betaine biosynthesis via choline pathway [regulation].</text>
</comment>
<accession>Q7MF14</accession>
<name>BETI_VIBVY</name>
<feature type="chain" id="PRO_0000070590" description="HTH-type transcriptional regulator BetI">
    <location>
        <begin position="1"/>
        <end position="198"/>
    </location>
</feature>
<feature type="domain" description="HTH tetR-type" evidence="2">
    <location>
        <begin position="8"/>
        <end position="68"/>
    </location>
</feature>
<feature type="DNA-binding region" description="H-T-H motif" evidence="2">
    <location>
        <begin position="31"/>
        <end position="50"/>
    </location>
</feature>
<sequence length="198" mass="22277">MPKVGMPKIRRPQLVSATMTVIDRVGLHGASVSLISQEAGVSSGIINHYFGGKHGLLEETMRDILRQLSCDATKRLNSLPKQAHMQRINAILDANFVGFQSESKVIKTWLAFWSYSMHDEALKRLQRVNEKRLLSHLKRELKALMSKEQADIVAQGIAALIDGIWLRGALNPEGINANKARIIINDYLEKQLTFYSQQ</sequence>
<keyword id="KW-0238">DNA-binding</keyword>
<keyword id="KW-0678">Repressor</keyword>
<keyword id="KW-0804">Transcription</keyword>
<keyword id="KW-0805">Transcription regulation</keyword>